<reference key="1">
    <citation type="journal article" date="2003" name="Mol. Microbiol.">
        <title>Genome-based analysis of virulence genes in a non-biofilm-forming Staphylococcus epidermidis strain (ATCC 12228).</title>
        <authorList>
            <person name="Zhang Y.-Q."/>
            <person name="Ren S.-X."/>
            <person name="Li H.-L."/>
            <person name="Wang Y.-X."/>
            <person name="Fu G."/>
            <person name="Yang J."/>
            <person name="Qin Z.-Q."/>
            <person name="Miao Y.-G."/>
            <person name="Wang W.-Y."/>
            <person name="Chen R.-S."/>
            <person name="Shen Y."/>
            <person name="Chen Z."/>
            <person name="Yuan Z.-H."/>
            <person name="Zhao G.-P."/>
            <person name="Qu D."/>
            <person name="Danchin A."/>
            <person name="Wen Y.-M."/>
        </authorList>
    </citation>
    <scope>NUCLEOTIDE SEQUENCE [LARGE SCALE GENOMIC DNA]</scope>
    <source>
        <strain>ATCC 12228 / FDA PCI 1200</strain>
    </source>
</reference>
<keyword id="KW-0963">Cytoplasm</keyword>
<keyword id="KW-0227">DNA damage</keyword>
<keyword id="KW-0234">DNA repair</keyword>
<keyword id="KW-0378">Hydrolase</keyword>
<accession>Q8CQ65</accession>
<organism>
    <name type="scientific">Staphylococcus epidermidis (strain ATCC 12228 / FDA PCI 1200)</name>
    <dbReference type="NCBI Taxonomy" id="176280"/>
    <lineage>
        <taxon>Bacteria</taxon>
        <taxon>Bacillati</taxon>
        <taxon>Bacillota</taxon>
        <taxon>Bacilli</taxon>
        <taxon>Bacillales</taxon>
        <taxon>Staphylococcaceae</taxon>
        <taxon>Staphylococcus</taxon>
    </lineage>
</organism>
<gene>
    <name evidence="1" type="primary">ung</name>
    <name type="ordered locus">SE_0351</name>
</gene>
<comment type="function">
    <text evidence="1">Excises uracil residues from the DNA which can arise as a result of misincorporation of dUMP residues by DNA polymerase or due to deamination of cytosine.</text>
</comment>
<comment type="catalytic activity">
    <reaction evidence="1">
        <text>Hydrolyzes single-stranded DNA or mismatched double-stranded DNA and polynucleotides, releasing free uracil.</text>
        <dbReference type="EC" id="3.2.2.27"/>
    </reaction>
</comment>
<comment type="subcellular location">
    <subcellularLocation>
        <location evidence="1">Cytoplasm</location>
    </subcellularLocation>
</comment>
<comment type="similarity">
    <text evidence="1">Belongs to the uracil-DNA glycosylase (UDG) superfamily. UNG family.</text>
</comment>
<name>UNG_STAES</name>
<dbReference type="EC" id="3.2.2.27" evidence="1"/>
<dbReference type="EMBL" id="AE015929">
    <property type="protein sequence ID" value="AAO03948.1"/>
    <property type="molecule type" value="Genomic_DNA"/>
</dbReference>
<dbReference type="RefSeq" id="NP_763906.1">
    <property type="nucleotide sequence ID" value="NC_004461.1"/>
</dbReference>
<dbReference type="RefSeq" id="WP_001832132.1">
    <property type="nucleotide sequence ID" value="NZ_WBME01000045.1"/>
</dbReference>
<dbReference type="SMR" id="Q8CQ65"/>
<dbReference type="KEGG" id="sep:SE_0351"/>
<dbReference type="PATRIC" id="fig|176280.10.peg.325"/>
<dbReference type="eggNOG" id="COG0692">
    <property type="taxonomic scope" value="Bacteria"/>
</dbReference>
<dbReference type="HOGENOM" id="CLU_032162_3_1_9"/>
<dbReference type="OrthoDB" id="9804372at2"/>
<dbReference type="Proteomes" id="UP000001411">
    <property type="component" value="Chromosome"/>
</dbReference>
<dbReference type="GO" id="GO:0005737">
    <property type="term" value="C:cytoplasm"/>
    <property type="evidence" value="ECO:0007669"/>
    <property type="project" value="UniProtKB-SubCell"/>
</dbReference>
<dbReference type="GO" id="GO:0004844">
    <property type="term" value="F:uracil DNA N-glycosylase activity"/>
    <property type="evidence" value="ECO:0007669"/>
    <property type="project" value="UniProtKB-UniRule"/>
</dbReference>
<dbReference type="GO" id="GO:0097510">
    <property type="term" value="P:base-excision repair, AP site formation via deaminated base removal"/>
    <property type="evidence" value="ECO:0007669"/>
    <property type="project" value="TreeGrafter"/>
</dbReference>
<dbReference type="CDD" id="cd10027">
    <property type="entry name" value="UDG-F1-like"/>
    <property type="match status" value="1"/>
</dbReference>
<dbReference type="FunFam" id="3.40.470.10:FF:000001">
    <property type="entry name" value="Uracil-DNA glycosylase"/>
    <property type="match status" value="1"/>
</dbReference>
<dbReference type="Gene3D" id="3.40.470.10">
    <property type="entry name" value="Uracil-DNA glycosylase-like domain"/>
    <property type="match status" value="1"/>
</dbReference>
<dbReference type="HAMAP" id="MF_00148">
    <property type="entry name" value="UDG"/>
    <property type="match status" value="1"/>
</dbReference>
<dbReference type="InterPro" id="IPR002043">
    <property type="entry name" value="UDG_fam1"/>
</dbReference>
<dbReference type="InterPro" id="IPR018085">
    <property type="entry name" value="Ura-DNA_Glyclase_AS"/>
</dbReference>
<dbReference type="InterPro" id="IPR005122">
    <property type="entry name" value="Uracil-DNA_glycosylase-like"/>
</dbReference>
<dbReference type="InterPro" id="IPR036895">
    <property type="entry name" value="Uracil-DNA_glycosylase-like_sf"/>
</dbReference>
<dbReference type="NCBIfam" id="NF003588">
    <property type="entry name" value="PRK05254.1-1"/>
    <property type="match status" value="1"/>
</dbReference>
<dbReference type="NCBIfam" id="NF003589">
    <property type="entry name" value="PRK05254.1-2"/>
    <property type="match status" value="1"/>
</dbReference>
<dbReference type="NCBIfam" id="NF003591">
    <property type="entry name" value="PRK05254.1-4"/>
    <property type="match status" value="1"/>
</dbReference>
<dbReference type="NCBIfam" id="NF003592">
    <property type="entry name" value="PRK05254.1-5"/>
    <property type="match status" value="1"/>
</dbReference>
<dbReference type="NCBIfam" id="TIGR00628">
    <property type="entry name" value="ung"/>
    <property type="match status" value="1"/>
</dbReference>
<dbReference type="PANTHER" id="PTHR11264">
    <property type="entry name" value="URACIL-DNA GLYCOSYLASE"/>
    <property type="match status" value="1"/>
</dbReference>
<dbReference type="PANTHER" id="PTHR11264:SF0">
    <property type="entry name" value="URACIL-DNA GLYCOSYLASE"/>
    <property type="match status" value="1"/>
</dbReference>
<dbReference type="Pfam" id="PF03167">
    <property type="entry name" value="UDG"/>
    <property type="match status" value="1"/>
</dbReference>
<dbReference type="SMART" id="SM00986">
    <property type="entry name" value="UDG"/>
    <property type="match status" value="1"/>
</dbReference>
<dbReference type="SMART" id="SM00987">
    <property type="entry name" value="UreE_C"/>
    <property type="match status" value="1"/>
</dbReference>
<dbReference type="SUPFAM" id="SSF52141">
    <property type="entry name" value="Uracil-DNA glycosylase-like"/>
    <property type="match status" value="1"/>
</dbReference>
<dbReference type="PROSITE" id="PS00130">
    <property type="entry name" value="U_DNA_GLYCOSYLASE"/>
    <property type="match status" value="1"/>
</dbReference>
<evidence type="ECO:0000255" key="1">
    <source>
        <dbReference type="HAMAP-Rule" id="MF_00148"/>
    </source>
</evidence>
<feature type="chain" id="PRO_0000176142" description="Uracil-DNA glycosylase">
    <location>
        <begin position="1"/>
        <end position="216"/>
    </location>
</feature>
<feature type="active site" description="Proton acceptor" evidence="1">
    <location>
        <position position="59"/>
    </location>
</feature>
<proteinExistence type="inferred from homology"/>
<sequence length="216" mass="25094">MKWSEVFHDITTRHDFQAMHDFLEKEYTTQTVYPDKQNIYQAFDLTPFEDIKVVILGQDPYHGPNQAHGLAFSVQPHAKFPPSLRNMYQELENDIGCHRTSPHLQDWAREGVLLLNTVLTVRQGEAHSHRNIGWETFTDEIIQAVSNYREHVVFILWGRPAQQKERFIDTSKHLIIKSPHPSPLSAFRGFFGSKPYSTTNNYLKSKGKTPVQWCES</sequence>
<protein>
    <recommendedName>
        <fullName evidence="1">Uracil-DNA glycosylase</fullName>
        <shortName evidence="1">UDG</shortName>
        <ecNumber evidence="1">3.2.2.27</ecNumber>
    </recommendedName>
</protein>